<keyword id="KW-0396">Initiation factor</keyword>
<keyword id="KW-0648">Protein biosynthesis</keyword>
<protein>
    <recommendedName>
        <fullName evidence="1">Translation initiation factor 2 subunit beta</fullName>
    </recommendedName>
    <alternativeName>
        <fullName evidence="1">aIF2-beta</fullName>
    </alternativeName>
    <alternativeName>
        <fullName evidence="1">eIF-2-beta</fullName>
    </alternativeName>
</protein>
<proteinExistence type="inferred from homology"/>
<organism>
    <name type="scientific">Methanococcus maripaludis (strain C5 / ATCC BAA-1333)</name>
    <dbReference type="NCBI Taxonomy" id="402880"/>
    <lineage>
        <taxon>Archaea</taxon>
        <taxon>Methanobacteriati</taxon>
        <taxon>Methanobacteriota</taxon>
        <taxon>Methanomada group</taxon>
        <taxon>Methanococci</taxon>
        <taxon>Methanococcales</taxon>
        <taxon>Methanococcaceae</taxon>
        <taxon>Methanococcus</taxon>
    </lineage>
</organism>
<sequence length="138" mass="15954">MVDYFDYNSLLTRAREQLPEEVFKDVRFEIPSADSFVEGNRTIIKNFKDIAKFMERDAQEFAKYVMKELGTAGDIEGVRLILQGKFGWRMVNEKIQNYVNEYVLCPECGKPDTKIVKEGRIHFLKCTACGAMKPVKTL</sequence>
<feature type="chain" id="PRO_1000021650" description="Translation initiation factor 2 subunit beta">
    <location>
        <begin position="1"/>
        <end position="138"/>
    </location>
</feature>
<dbReference type="EMBL" id="CP000609">
    <property type="protein sequence ID" value="ABO35674.1"/>
    <property type="molecule type" value="Genomic_DNA"/>
</dbReference>
<dbReference type="RefSeq" id="WP_011869125.1">
    <property type="nucleotide sequence ID" value="NC_009135.1"/>
</dbReference>
<dbReference type="SMR" id="A4FZP0"/>
<dbReference type="STRING" id="402880.MmarC5_1376"/>
<dbReference type="GeneID" id="4927678"/>
<dbReference type="KEGG" id="mmq:MmarC5_1376"/>
<dbReference type="eggNOG" id="arCOG01640">
    <property type="taxonomic scope" value="Archaea"/>
</dbReference>
<dbReference type="HOGENOM" id="CLU_026663_3_1_2"/>
<dbReference type="OrthoDB" id="38099at2157"/>
<dbReference type="Proteomes" id="UP000000253">
    <property type="component" value="Chromosome"/>
</dbReference>
<dbReference type="GO" id="GO:0003743">
    <property type="term" value="F:translation initiation factor activity"/>
    <property type="evidence" value="ECO:0007669"/>
    <property type="project" value="UniProtKB-UniRule"/>
</dbReference>
<dbReference type="FunFam" id="3.30.30.170:FF:000001">
    <property type="entry name" value="Eukaryotic translation initiation factor 2 subunit"/>
    <property type="match status" value="1"/>
</dbReference>
<dbReference type="Gene3D" id="3.30.30.170">
    <property type="match status" value="1"/>
</dbReference>
<dbReference type="HAMAP" id="MF_00232">
    <property type="entry name" value="eIF_2_beta"/>
    <property type="match status" value="1"/>
</dbReference>
<dbReference type="InterPro" id="IPR045196">
    <property type="entry name" value="IF2/IF5"/>
</dbReference>
<dbReference type="InterPro" id="IPR004458">
    <property type="entry name" value="TIF2_bsu_arc"/>
</dbReference>
<dbReference type="InterPro" id="IPR002735">
    <property type="entry name" value="Transl_init_fac_IF2/IF5_dom"/>
</dbReference>
<dbReference type="InterPro" id="IPR016189">
    <property type="entry name" value="Transl_init_fac_IF2/IF5_N"/>
</dbReference>
<dbReference type="InterPro" id="IPR016190">
    <property type="entry name" value="Transl_init_fac_IF2/IF5_Zn-bd"/>
</dbReference>
<dbReference type="NCBIfam" id="TIGR00311">
    <property type="entry name" value="aIF-2beta"/>
    <property type="match status" value="1"/>
</dbReference>
<dbReference type="NCBIfam" id="NF003067">
    <property type="entry name" value="PRK03988.1"/>
    <property type="match status" value="1"/>
</dbReference>
<dbReference type="PANTHER" id="PTHR23001">
    <property type="entry name" value="EUKARYOTIC TRANSLATION INITIATION FACTOR"/>
    <property type="match status" value="1"/>
</dbReference>
<dbReference type="PANTHER" id="PTHR23001:SF3">
    <property type="entry name" value="EUKARYOTIC TRANSLATION INITIATION FACTOR 2 SUBUNIT 2"/>
    <property type="match status" value="1"/>
</dbReference>
<dbReference type="Pfam" id="PF01873">
    <property type="entry name" value="eIF-5_eIF-2B"/>
    <property type="match status" value="1"/>
</dbReference>
<dbReference type="SMART" id="SM00653">
    <property type="entry name" value="eIF2B_5"/>
    <property type="match status" value="1"/>
</dbReference>
<dbReference type="SUPFAM" id="SSF100966">
    <property type="entry name" value="Translation initiation factor 2 beta, aIF2beta, N-terminal domain"/>
    <property type="match status" value="1"/>
</dbReference>
<dbReference type="SUPFAM" id="SSF75689">
    <property type="entry name" value="Zinc-binding domain of translation initiation factor 2 beta"/>
    <property type="match status" value="1"/>
</dbReference>
<accession>A4FZP0</accession>
<gene>
    <name evidence="1" type="primary">eif2b</name>
    <name type="ordered locus">MmarC5_1376</name>
</gene>
<name>IF2B_METM5</name>
<reference key="1">
    <citation type="submission" date="2007-03" db="EMBL/GenBank/DDBJ databases">
        <title>Complete sequence of chromosome of Methanococcus maripaludis C5.</title>
        <authorList>
            <consortium name="US DOE Joint Genome Institute"/>
            <person name="Copeland A."/>
            <person name="Lucas S."/>
            <person name="Lapidus A."/>
            <person name="Barry K."/>
            <person name="Glavina del Rio T."/>
            <person name="Dalin E."/>
            <person name="Tice H."/>
            <person name="Pitluck S."/>
            <person name="Chertkov O."/>
            <person name="Brettin T."/>
            <person name="Bruce D."/>
            <person name="Han C."/>
            <person name="Detter J.C."/>
            <person name="Schmutz J."/>
            <person name="Larimer F."/>
            <person name="Land M."/>
            <person name="Hauser L."/>
            <person name="Kyrpides N."/>
            <person name="Mikhailova N."/>
            <person name="Sieprawska-Lupa M."/>
            <person name="Whitman W.B."/>
            <person name="Richardson P."/>
        </authorList>
    </citation>
    <scope>NUCLEOTIDE SEQUENCE [LARGE SCALE GENOMIC DNA]</scope>
    <source>
        <strain>C5 / ATCC BAA-1333</strain>
    </source>
</reference>
<comment type="function">
    <text evidence="1">eIF-2 functions in the early steps of protein synthesis by forming a ternary complex with GTP and initiator tRNA.</text>
</comment>
<comment type="subunit">
    <text evidence="1">Heterotrimer composed of an alpha, a beta and a gamma chain.</text>
</comment>
<comment type="similarity">
    <text evidence="1">Belongs to the eIF-2-beta/eIF-5 family.</text>
</comment>
<evidence type="ECO:0000255" key="1">
    <source>
        <dbReference type="HAMAP-Rule" id="MF_00232"/>
    </source>
</evidence>